<accession>A2S567</accession>
<sequence length="185" mass="19741">MENTQENPTDQTTEETGREAQAAEPAAQAAENAAPAAEAALAEAQAKIAELQESFLRAKAETENVRRRAQDDVAKAHKFAIEGFAENLLPVLDSLEAAVGDTSGDLAKVREGVELTLRQLTSALEKGRVAALNPVGEKFDPHLHQAISMVPADQEPNTVVAVLQKGYTIADRVLRPALVTVAQPK</sequence>
<gene>
    <name evidence="1" type="primary">grpE</name>
    <name type="ordered locus">BMA10229_A1101</name>
</gene>
<reference key="1">
    <citation type="journal article" date="2010" name="Genome Biol. Evol.">
        <title>Continuing evolution of Burkholderia mallei through genome reduction and large-scale rearrangements.</title>
        <authorList>
            <person name="Losada L."/>
            <person name="Ronning C.M."/>
            <person name="DeShazer D."/>
            <person name="Woods D."/>
            <person name="Fedorova N."/>
            <person name="Kim H.S."/>
            <person name="Shabalina S.A."/>
            <person name="Pearson T.R."/>
            <person name="Brinkac L."/>
            <person name="Tan P."/>
            <person name="Nandi T."/>
            <person name="Crabtree J."/>
            <person name="Badger J."/>
            <person name="Beckstrom-Sternberg S."/>
            <person name="Saqib M."/>
            <person name="Schutzer S.E."/>
            <person name="Keim P."/>
            <person name="Nierman W.C."/>
        </authorList>
    </citation>
    <scope>NUCLEOTIDE SEQUENCE [LARGE SCALE GENOMIC DNA]</scope>
    <source>
        <strain>NCTC 10229</strain>
    </source>
</reference>
<protein>
    <recommendedName>
        <fullName evidence="1">Protein GrpE</fullName>
    </recommendedName>
    <alternativeName>
        <fullName evidence="1">HSP-70 cofactor</fullName>
    </alternativeName>
</protein>
<keyword id="KW-0143">Chaperone</keyword>
<keyword id="KW-0963">Cytoplasm</keyword>
<keyword id="KW-0346">Stress response</keyword>
<evidence type="ECO:0000255" key="1">
    <source>
        <dbReference type="HAMAP-Rule" id="MF_01151"/>
    </source>
</evidence>
<evidence type="ECO:0000256" key="2">
    <source>
        <dbReference type="SAM" id="MobiDB-lite"/>
    </source>
</evidence>
<dbReference type="EMBL" id="CP000546">
    <property type="protein sequence ID" value="ABN03418.1"/>
    <property type="molecule type" value="Genomic_DNA"/>
</dbReference>
<dbReference type="RefSeq" id="WP_004194243.1">
    <property type="nucleotide sequence ID" value="NC_008836.1"/>
</dbReference>
<dbReference type="SMR" id="A2S567"/>
<dbReference type="GeneID" id="93061417"/>
<dbReference type="KEGG" id="bml:BMA10229_A1101"/>
<dbReference type="HOGENOM" id="CLU_057217_6_1_4"/>
<dbReference type="Proteomes" id="UP000002283">
    <property type="component" value="Chromosome I"/>
</dbReference>
<dbReference type="GO" id="GO:0005829">
    <property type="term" value="C:cytosol"/>
    <property type="evidence" value="ECO:0007669"/>
    <property type="project" value="TreeGrafter"/>
</dbReference>
<dbReference type="GO" id="GO:0000774">
    <property type="term" value="F:adenyl-nucleotide exchange factor activity"/>
    <property type="evidence" value="ECO:0007669"/>
    <property type="project" value="InterPro"/>
</dbReference>
<dbReference type="GO" id="GO:0042803">
    <property type="term" value="F:protein homodimerization activity"/>
    <property type="evidence" value="ECO:0007669"/>
    <property type="project" value="InterPro"/>
</dbReference>
<dbReference type="GO" id="GO:0051087">
    <property type="term" value="F:protein-folding chaperone binding"/>
    <property type="evidence" value="ECO:0007669"/>
    <property type="project" value="InterPro"/>
</dbReference>
<dbReference type="GO" id="GO:0051082">
    <property type="term" value="F:unfolded protein binding"/>
    <property type="evidence" value="ECO:0007669"/>
    <property type="project" value="TreeGrafter"/>
</dbReference>
<dbReference type="GO" id="GO:0006457">
    <property type="term" value="P:protein folding"/>
    <property type="evidence" value="ECO:0007669"/>
    <property type="project" value="InterPro"/>
</dbReference>
<dbReference type="CDD" id="cd00446">
    <property type="entry name" value="GrpE"/>
    <property type="match status" value="1"/>
</dbReference>
<dbReference type="FunFam" id="2.30.22.10:FF:000001">
    <property type="entry name" value="Protein GrpE"/>
    <property type="match status" value="1"/>
</dbReference>
<dbReference type="Gene3D" id="3.90.20.20">
    <property type="match status" value="1"/>
</dbReference>
<dbReference type="Gene3D" id="2.30.22.10">
    <property type="entry name" value="Head domain of nucleotide exchange factor GrpE"/>
    <property type="match status" value="1"/>
</dbReference>
<dbReference type="HAMAP" id="MF_01151">
    <property type="entry name" value="GrpE"/>
    <property type="match status" value="1"/>
</dbReference>
<dbReference type="InterPro" id="IPR000740">
    <property type="entry name" value="GrpE"/>
</dbReference>
<dbReference type="InterPro" id="IPR013805">
    <property type="entry name" value="GrpE_coiled_coil"/>
</dbReference>
<dbReference type="InterPro" id="IPR009012">
    <property type="entry name" value="GrpE_head"/>
</dbReference>
<dbReference type="NCBIfam" id="NF010737">
    <property type="entry name" value="PRK14139.1"/>
    <property type="match status" value="1"/>
</dbReference>
<dbReference type="NCBIfam" id="NF010738">
    <property type="entry name" value="PRK14140.1"/>
    <property type="match status" value="1"/>
</dbReference>
<dbReference type="NCBIfam" id="NF010748">
    <property type="entry name" value="PRK14150.1"/>
    <property type="match status" value="1"/>
</dbReference>
<dbReference type="PANTHER" id="PTHR21237">
    <property type="entry name" value="GRPE PROTEIN"/>
    <property type="match status" value="1"/>
</dbReference>
<dbReference type="PANTHER" id="PTHR21237:SF23">
    <property type="entry name" value="GRPE PROTEIN HOMOLOG, MITOCHONDRIAL"/>
    <property type="match status" value="1"/>
</dbReference>
<dbReference type="Pfam" id="PF01025">
    <property type="entry name" value="GrpE"/>
    <property type="match status" value="1"/>
</dbReference>
<dbReference type="PRINTS" id="PR00773">
    <property type="entry name" value="GRPEPROTEIN"/>
</dbReference>
<dbReference type="SUPFAM" id="SSF58014">
    <property type="entry name" value="Coiled-coil domain of nucleotide exchange factor GrpE"/>
    <property type="match status" value="1"/>
</dbReference>
<dbReference type="SUPFAM" id="SSF51064">
    <property type="entry name" value="Head domain of nucleotide exchange factor GrpE"/>
    <property type="match status" value="1"/>
</dbReference>
<dbReference type="PROSITE" id="PS01071">
    <property type="entry name" value="GRPE"/>
    <property type="match status" value="1"/>
</dbReference>
<feature type="chain" id="PRO_1000053553" description="Protein GrpE">
    <location>
        <begin position="1"/>
        <end position="185"/>
    </location>
</feature>
<feature type="region of interest" description="Disordered" evidence="2">
    <location>
        <begin position="1"/>
        <end position="38"/>
    </location>
</feature>
<feature type="compositionally biased region" description="Polar residues" evidence="2">
    <location>
        <begin position="1"/>
        <end position="11"/>
    </location>
</feature>
<feature type="compositionally biased region" description="Low complexity" evidence="2">
    <location>
        <begin position="19"/>
        <end position="38"/>
    </location>
</feature>
<comment type="function">
    <text evidence="1">Participates actively in the response to hyperosmotic and heat shock by preventing the aggregation of stress-denatured proteins, in association with DnaK and GrpE. It is the nucleotide exchange factor for DnaK and may function as a thermosensor. Unfolded proteins bind initially to DnaJ; upon interaction with the DnaJ-bound protein, DnaK hydrolyzes its bound ATP, resulting in the formation of a stable complex. GrpE releases ADP from DnaK; ATP binding to DnaK triggers the release of the substrate protein, thus completing the reaction cycle. Several rounds of ATP-dependent interactions between DnaJ, DnaK and GrpE are required for fully efficient folding.</text>
</comment>
<comment type="subunit">
    <text evidence="1">Homodimer.</text>
</comment>
<comment type="subcellular location">
    <subcellularLocation>
        <location evidence="1">Cytoplasm</location>
    </subcellularLocation>
</comment>
<comment type="similarity">
    <text evidence="1">Belongs to the GrpE family.</text>
</comment>
<organism>
    <name type="scientific">Burkholderia mallei (strain NCTC 10229)</name>
    <dbReference type="NCBI Taxonomy" id="412022"/>
    <lineage>
        <taxon>Bacteria</taxon>
        <taxon>Pseudomonadati</taxon>
        <taxon>Pseudomonadota</taxon>
        <taxon>Betaproteobacteria</taxon>
        <taxon>Burkholderiales</taxon>
        <taxon>Burkholderiaceae</taxon>
        <taxon>Burkholderia</taxon>
        <taxon>pseudomallei group</taxon>
    </lineage>
</organism>
<name>GRPE_BURM9</name>
<proteinExistence type="inferred from homology"/>